<dbReference type="EMBL" id="CP000139">
    <property type="protein sequence ID" value="ABR39105.1"/>
    <property type="molecule type" value="Genomic_DNA"/>
</dbReference>
<dbReference type="RefSeq" id="WP_005845365.1">
    <property type="nucleotide sequence ID" value="NZ_JANSWM010000116.1"/>
</dbReference>
<dbReference type="SMR" id="A6L091"/>
<dbReference type="STRING" id="435590.BVU_1417"/>
<dbReference type="PaxDb" id="435590-BVU_1417"/>
<dbReference type="GeneID" id="5302383"/>
<dbReference type="KEGG" id="bvu:BVU_1417"/>
<dbReference type="eggNOG" id="COG0509">
    <property type="taxonomic scope" value="Bacteria"/>
</dbReference>
<dbReference type="HOGENOM" id="CLU_097408_2_2_10"/>
<dbReference type="BioCyc" id="BVUL435590:G1G59-1483-MONOMER"/>
<dbReference type="Proteomes" id="UP000002861">
    <property type="component" value="Chromosome"/>
</dbReference>
<dbReference type="GO" id="GO:0005829">
    <property type="term" value="C:cytosol"/>
    <property type="evidence" value="ECO:0007669"/>
    <property type="project" value="TreeGrafter"/>
</dbReference>
<dbReference type="GO" id="GO:0005960">
    <property type="term" value="C:glycine cleavage complex"/>
    <property type="evidence" value="ECO:0007669"/>
    <property type="project" value="InterPro"/>
</dbReference>
<dbReference type="GO" id="GO:0019464">
    <property type="term" value="P:glycine decarboxylation via glycine cleavage system"/>
    <property type="evidence" value="ECO:0007669"/>
    <property type="project" value="UniProtKB-UniRule"/>
</dbReference>
<dbReference type="CDD" id="cd06848">
    <property type="entry name" value="GCS_H"/>
    <property type="match status" value="1"/>
</dbReference>
<dbReference type="Gene3D" id="2.40.50.100">
    <property type="match status" value="1"/>
</dbReference>
<dbReference type="HAMAP" id="MF_00272">
    <property type="entry name" value="GcvH"/>
    <property type="match status" value="1"/>
</dbReference>
<dbReference type="InterPro" id="IPR003016">
    <property type="entry name" value="2-oxoA_DH_lipoyl-BS"/>
</dbReference>
<dbReference type="InterPro" id="IPR000089">
    <property type="entry name" value="Biotin_lipoyl"/>
</dbReference>
<dbReference type="InterPro" id="IPR002930">
    <property type="entry name" value="GCV_H"/>
</dbReference>
<dbReference type="InterPro" id="IPR033753">
    <property type="entry name" value="GCV_H/Fam206"/>
</dbReference>
<dbReference type="InterPro" id="IPR017453">
    <property type="entry name" value="GCV_H_sub"/>
</dbReference>
<dbReference type="InterPro" id="IPR011053">
    <property type="entry name" value="Single_hybrid_motif"/>
</dbReference>
<dbReference type="NCBIfam" id="TIGR00527">
    <property type="entry name" value="gcvH"/>
    <property type="match status" value="1"/>
</dbReference>
<dbReference type="NCBIfam" id="NF002270">
    <property type="entry name" value="PRK01202.1"/>
    <property type="match status" value="1"/>
</dbReference>
<dbReference type="PANTHER" id="PTHR11715">
    <property type="entry name" value="GLYCINE CLEAVAGE SYSTEM H PROTEIN"/>
    <property type="match status" value="1"/>
</dbReference>
<dbReference type="PANTHER" id="PTHR11715:SF3">
    <property type="entry name" value="GLYCINE CLEAVAGE SYSTEM H PROTEIN-RELATED"/>
    <property type="match status" value="1"/>
</dbReference>
<dbReference type="Pfam" id="PF01597">
    <property type="entry name" value="GCV_H"/>
    <property type="match status" value="1"/>
</dbReference>
<dbReference type="SUPFAM" id="SSF51230">
    <property type="entry name" value="Single hybrid motif"/>
    <property type="match status" value="1"/>
</dbReference>
<dbReference type="PROSITE" id="PS50968">
    <property type="entry name" value="BIOTINYL_LIPOYL"/>
    <property type="match status" value="1"/>
</dbReference>
<dbReference type="PROSITE" id="PS00189">
    <property type="entry name" value="LIPOYL"/>
    <property type="match status" value="1"/>
</dbReference>
<feature type="chain" id="PRO_0000302353" description="Glycine cleavage system H protein">
    <location>
        <begin position="1"/>
        <end position="126"/>
    </location>
</feature>
<feature type="domain" description="Lipoyl-binding" evidence="2">
    <location>
        <begin position="22"/>
        <end position="104"/>
    </location>
</feature>
<feature type="modified residue" description="N6-lipoyllysine" evidence="1">
    <location>
        <position position="63"/>
    </location>
</feature>
<reference key="1">
    <citation type="journal article" date="2007" name="PLoS Biol.">
        <title>Evolution of symbiotic bacteria in the distal human intestine.</title>
        <authorList>
            <person name="Xu J."/>
            <person name="Mahowald M.A."/>
            <person name="Ley R.E."/>
            <person name="Lozupone C.A."/>
            <person name="Hamady M."/>
            <person name="Martens E.C."/>
            <person name="Henrissat B."/>
            <person name="Coutinho P.M."/>
            <person name="Minx P."/>
            <person name="Latreille P."/>
            <person name="Cordum H."/>
            <person name="Van Brunt A."/>
            <person name="Kim K."/>
            <person name="Fulton R.S."/>
            <person name="Fulton L.A."/>
            <person name="Clifton S.W."/>
            <person name="Wilson R.K."/>
            <person name="Knight R.D."/>
            <person name="Gordon J.I."/>
        </authorList>
    </citation>
    <scope>NUCLEOTIDE SEQUENCE [LARGE SCALE GENOMIC DNA]</scope>
    <source>
        <strain>ATCC 8482 / DSM 1447 / JCM 5826 / CCUG 4940 / NBRC 14291 / NCTC 11154</strain>
    </source>
</reference>
<keyword id="KW-0450">Lipoyl</keyword>
<proteinExistence type="inferred from homology"/>
<evidence type="ECO:0000255" key="1">
    <source>
        <dbReference type="HAMAP-Rule" id="MF_00272"/>
    </source>
</evidence>
<evidence type="ECO:0000255" key="2">
    <source>
        <dbReference type="PROSITE-ProRule" id="PRU01066"/>
    </source>
</evidence>
<gene>
    <name evidence="1" type="primary">gcvH</name>
    <name type="ordered locus">BVU_1417</name>
</gene>
<organism>
    <name type="scientific">Phocaeicola vulgatus (strain ATCC 8482 / DSM 1447 / JCM 5826 / CCUG 4940 / NBRC 14291 / NCTC 11154)</name>
    <name type="common">Bacteroides vulgatus</name>
    <dbReference type="NCBI Taxonomy" id="435590"/>
    <lineage>
        <taxon>Bacteria</taxon>
        <taxon>Pseudomonadati</taxon>
        <taxon>Bacteroidota</taxon>
        <taxon>Bacteroidia</taxon>
        <taxon>Bacteroidales</taxon>
        <taxon>Bacteroidaceae</taxon>
        <taxon>Phocaeicola</taxon>
    </lineage>
</organism>
<sequence length="126" mass="14151">MEFPSNVKYTKEHEWIRVEGDIAYVGITDYAQEQLGDIVFVDITTEGETLEKDEVFGTIEVVKTISDLFLPVSGEVLEQNEALADNPELVNQDPYGKGWLIKIKPNDSNDVNDLLDAEGYKALVNE</sequence>
<comment type="function">
    <text evidence="1">The glycine cleavage system catalyzes the degradation of glycine. The H protein shuttles the methylamine group of glycine from the P protein to the T protein.</text>
</comment>
<comment type="cofactor">
    <cofactor evidence="1">
        <name>(R)-lipoate</name>
        <dbReference type="ChEBI" id="CHEBI:83088"/>
    </cofactor>
    <text evidence="1">Binds 1 lipoyl cofactor covalently.</text>
</comment>
<comment type="subunit">
    <text evidence="1">The glycine cleavage system is composed of four proteins: P, T, L and H.</text>
</comment>
<comment type="similarity">
    <text evidence="1">Belongs to the GcvH family.</text>
</comment>
<name>GCSH_PHOV8</name>
<accession>A6L091</accession>
<protein>
    <recommendedName>
        <fullName evidence="1">Glycine cleavage system H protein</fullName>
    </recommendedName>
</protein>